<comment type="function">
    <text evidence="1">Together with its co-chaperonin GroES, plays an essential role in assisting protein folding. The GroEL-GroES system forms a nano-cage that allows encapsulation of the non-native substrate proteins and provides a physical environment optimized to promote and accelerate protein folding.</text>
</comment>
<comment type="catalytic activity">
    <reaction evidence="1">
        <text>ATP + H2O + a folded polypeptide = ADP + phosphate + an unfolded polypeptide.</text>
        <dbReference type="EC" id="5.6.1.7"/>
    </reaction>
</comment>
<comment type="subunit">
    <text evidence="1">Forms a cylinder of 14 subunits composed of two heptameric rings stacked back-to-back. Interacts with the co-chaperonin GroES.</text>
</comment>
<comment type="subcellular location">
    <subcellularLocation>
        <location evidence="1">Cytoplasm</location>
    </subcellularLocation>
</comment>
<comment type="similarity">
    <text evidence="1">Belongs to the chaperonin (HSP60) family.</text>
</comment>
<name>CH602_PROM2</name>
<accession>A8G6T6</accession>
<organism>
    <name type="scientific">Prochlorococcus marinus (strain MIT 9215)</name>
    <dbReference type="NCBI Taxonomy" id="93060"/>
    <lineage>
        <taxon>Bacteria</taxon>
        <taxon>Bacillati</taxon>
        <taxon>Cyanobacteriota</taxon>
        <taxon>Cyanophyceae</taxon>
        <taxon>Synechococcales</taxon>
        <taxon>Prochlorococcaceae</taxon>
        <taxon>Prochlorococcus</taxon>
    </lineage>
</organism>
<dbReference type="EC" id="5.6.1.7" evidence="1"/>
<dbReference type="EMBL" id="CP000825">
    <property type="protein sequence ID" value="ABV51317.1"/>
    <property type="molecule type" value="Genomic_DNA"/>
</dbReference>
<dbReference type="RefSeq" id="WP_002805622.1">
    <property type="nucleotide sequence ID" value="NC_009840.1"/>
</dbReference>
<dbReference type="SMR" id="A8G6T6"/>
<dbReference type="STRING" id="93060.P9215_17041"/>
<dbReference type="KEGG" id="pmh:P9215_17041"/>
<dbReference type="eggNOG" id="COG0459">
    <property type="taxonomic scope" value="Bacteria"/>
</dbReference>
<dbReference type="HOGENOM" id="CLU_016503_3_0_3"/>
<dbReference type="OrthoDB" id="9766614at2"/>
<dbReference type="Proteomes" id="UP000002014">
    <property type="component" value="Chromosome"/>
</dbReference>
<dbReference type="GO" id="GO:0005737">
    <property type="term" value="C:cytoplasm"/>
    <property type="evidence" value="ECO:0007669"/>
    <property type="project" value="UniProtKB-SubCell"/>
</dbReference>
<dbReference type="GO" id="GO:0005524">
    <property type="term" value="F:ATP binding"/>
    <property type="evidence" value="ECO:0007669"/>
    <property type="project" value="UniProtKB-UniRule"/>
</dbReference>
<dbReference type="GO" id="GO:0140662">
    <property type="term" value="F:ATP-dependent protein folding chaperone"/>
    <property type="evidence" value="ECO:0007669"/>
    <property type="project" value="InterPro"/>
</dbReference>
<dbReference type="GO" id="GO:0016853">
    <property type="term" value="F:isomerase activity"/>
    <property type="evidence" value="ECO:0007669"/>
    <property type="project" value="UniProtKB-KW"/>
</dbReference>
<dbReference type="GO" id="GO:0051082">
    <property type="term" value="F:unfolded protein binding"/>
    <property type="evidence" value="ECO:0007669"/>
    <property type="project" value="UniProtKB-UniRule"/>
</dbReference>
<dbReference type="GO" id="GO:0042026">
    <property type="term" value="P:protein refolding"/>
    <property type="evidence" value="ECO:0007669"/>
    <property type="project" value="UniProtKB-UniRule"/>
</dbReference>
<dbReference type="CDD" id="cd03344">
    <property type="entry name" value="GroEL"/>
    <property type="match status" value="1"/>
</dbReference>
<dbReference type="FunFam" id="3.50.7.10:FF:000001">
    <property type="entry name" value="60 kDa chaperonin"/>
    <property type="match status" value="1"/>
</dbReference>
<dbReference type="Gene3D" id="3.50.7.10">
    <property type="entry name" value="GroEL"/>
    <property type="match status" value="1"/>
</dbReference>
<dbReference type="Gene3D" id="1.10.560.10">
    <property type="entry name" value="GroEL-like equatorial domain"/>
    <property type="match status" value="1"/>
</dbReference>
<dbReference type="Gene3D" id="3.30.260.10">
    <property type="entry name" value="TCP-1-like chaperonin intermediate domain"/>
    <property type="match status" value="1"/>
</dbReference>
<dbReference type="HAMAP" id="MF_00600">
    <property type="entry name" value="CH60"/>
    <property type="match status" value="1"/>
</dbReference>
<dbReference type="InterPro" id="IPR018370">
    <property type="entry name" value="Chaperonin_Cpn60_CS"/>
</dbReference>
<dbReference type="InterPro" id="IPR001844">
    <property type="entry name" value="Cpn60/GroEL"/>
</dbReference>
<dbReference type="InterPro" id="IPR002423">
    <property type="entry name" value="Cpn60/GroEL/TCP-1"/>
</dbReference>
<dbReference type="InterPro" id="IPR027409">
    <property type="entry name" value="GroEL-like_apical_dom_sf"/>
</dbReference>
<dbReference type="InterPro" id="IPR027413">
    <property type="entry name" value="GROEL-like_equatorial_sf"/>
</dbReference>
<dbReference type="InterPro" id="IPR027410">
    <property type="entry name" value="TCP-1-like_intermed_sf"/>
</dbReference>
<dbReference type="NCBIfam" id="TIGR02348">
    <property type="entry name" value="GroEL"/>
    <property type="match status" value="1"/>
</dbReference>
<dbReference type="NCBIfam" id="NF000592">
    <property type="entry name" value="PRK00013.1"/>
    <property type="match status" value="1"/>
</dbReference>
<dbReference type="NCBIfam" id="NF009487">
    <property type="entry name" value="PRK12849.1"/>
    <property type="match status" value="1"/>
</dbReference>
<dbReference type="NCBIfam" id="NF009488">
    <property type="entry name" value="PRK12850.1"/>
    <property type="match status" value="1"/>
</dbReference>
<dbReference type="NCBIfam" id="NF009489">
    <property type="entry name" value="PRK12851.1"/>
    <property type="match status" value="1"/>
</dbReference>
<dbReference type="PANTHER" id="PTHR45633">
    <property type="entry name" value="60 KDA HEAT SHOCK PROTEIN, MITOCHONDRIAL"/>
    <property type="match status" value="1"/>
</dbReference>
<dbReference type="Pfam" id="PF00118">
    <property type="entry name" value="Cpn60_TCP1"/>
    <property type="match status" value="1"/>
</dbReference>
<dbReference type="PRINTS" id="PR00298">
    <property type="entry name" value="CHAPERONIN60"/>
</dbReference>
<dbReference type="SUPFAM" id="SSF52029">
    <property type="entry name" value="GroEL apical domain-like"/>
    <property type="match status" value="1"/>
</dbReference>
<dbReference type="SUPFAM" id="SSF48592">
    <property type="entry name" value="GroEL equatorial domain-like"/>
    <property type="match status" value="2"/>
</dbReference>
<dbReference type="PROSITE" id="PS00296">
    <property type="entry name" value="CHAPERONINS_CPN60"/>
    <property type="match status" value="1"/>
</dbReference>
<sequence>MAKRIIYNEQARRALERGIDILAESVAVTLGPKGRNVVLEKKFGAPQIINDGVTIAKEIELEDHIENTGVALIRQAASKTNDAAGDGTTTATVLAHAMVKAGLRNVAAGANAITLKKGIDKATEFLVGKIQDNSKPISDSNAIAQCGTIAAGNDEEVGQMIANAMDKVGKEGVISLEEGKSMTTELEVTEGMRFDKGYISPYFATDTERMEAVLDEPYILLTDKKIALVQDLVPVLEQIAKTGKPLVIIAEDIEKEALATLVVNRLRGVLNVAAVKAPGFGDRRKAMLEDMAVLTNGQLITEDAGLKLENATLDMLGTGRRITINKETTTIVAEGNEQAVKARCDQIKKQMDETDSSYDKEKLQERLAKLAGGVAVIKVGAATETEMKDKKLRLEDAINATKAAVEEGIVPGGGTTLAHLSPILKEWADKNLKGEELIGANIVEASLTAPLMRIAENAGSNGAVIAENVKTKPFNDGFNAATGEYVDMSSAGIVDPAKVTRSGLQNAASIAGMVLTTECIVADLPEKKDSASPAGAPGMGGDFDY</sequence>
<feature type="chain" id="PRO_0000332041" description="Chaperonin GroEL 2">
    <location>
        <begin position="1"/>
        <end position="545"/>
    </location>
</feature>
<feature type="binding site" evidence="1">
    <location>
        <begin position="29"/>
        <end position="32"/>
    </location>
    <ligand>
        <name>ATP</name>
        <dbReference type="ChEBI" id="CHEBI:30616"/>
    </ligand>
</feature>
<feature type="binding site" evidence="1">
    <location>
        <begin position="86"/>
        <end position="90"/>
    </location>
    <ligand>
        <name>ATP</name>
        <dbReference type="ChEBI" id="CHEBI:30616"/>
    </ligand>
</feature>
<feature type="binding site" evidence="1">
    <location>
        <position position="413"/>
    </location>
    <ligand>
        <name>ATP</name>
        <dbReference type="ChEBI" id="CHEBI:30616"/>
    </ligand>
</feature>
<feature type="binding site" evidence="1">
    <location>
        <begin position="479"/>
        <end position="481"/>
    </location>
    <ligand>
        <name>ATP</name>
        <dbReference type="ChEBI" id="CHEBI:30616"/>
    </ligand>
</feature>
<feature type="binding site" evidence="1">
    <location>
        <position position="495"/>
    </location>
    <ligand>
        <name>ATP</name>
        <dbReference type="ChEBI" id="CHEBI:30616"/>
    </ligand>
</feature>
<evidence type="ECO:0000255" key="1">
    <source>
        <dbReference type="HAMAP-Rule" id="MF_00600"/>
    </source>
</evidence>
<proteinExistence type="inferred from homology"/>
<reference key="1">
    <citation type="journal article" date="2007" name="PLoS Genet.">
        <title>Patterns and implications of gene gain and loss in the evolution of Prochlorococcus.</title>
        <authorList>
            <person name="Kettler G.C."/>
            <person name="Martiny A.C."/>
            <person name="Huang K."/>
            <person name="Zucker J."/>
            <person name="Coleman M.L."/>
            <person name="Rodrigue S."/>
            <person name="Chen F."/>
            <person name="Lapidus A."/>
            <person name="Ferriera S."/>
            <person name="Johnson J."/>
            <person name="Steglich C."/>
            <person name="Church G.M."/>
            <person name="Richardson P."/>
            <person name="Chisholm S.W."/>
        </authorList>
    </citation>
    <scope>NUCLEOTIDE SEQUENCE [LARGE SCALE GENOMIC DNA]</scope>
    <source>
        <strain>MIT 9215</strain>
    </source>
</reference>
<protein>
    <recommendedName>
        <fullName evidence="1">Chaperonin GroEL 2</fullName>
        <ecNumber evidence="1">5.6.1.7</ecNumber>
    </recommendedName>
    <alternativeName>
        <fullName evidence="1">60 kDa chaperonin 2</fullName>
    </alternativeName>
    <alternativeName>
        <fullName evidence="1">Chaperonin-60 2</fullName>
        <shortName evidence="1">Cpn60 2</shortName>
    </alternativeName>
</protein>
<gene>
    <name evidence="1" type="primary">groEL2</name>
    <name evidence="1" type="synonym">groL2</name>
    <name type="ordered locus">P9215_17041</name>
</gene>
<keyword id="KW-0067">ATP-binding</keyword>
<keyword id="KW-0143">Chaperone</keyword>
<keyword id="KW-0963">Cytoplasm</keyword>
<keyword id="KW-0413">Isomerase</keyword>
<keyword id="KW-0547">Nucleotide-binding</keyword>